<gene>
    <name evidence="1" type="primary">rsmA</name>
    <name evidence="1" type="synonym">ksgA</name>
    <name type="ordered locus">Wbm0407</name>
</gene>
<protein>
    <recommendedName>
        <fullName evidence="1">Ribosomal RNA small subunit methyltransferase A</fullName>
        <ecNumber evidence="1">2.1.1.182</ecNumber>
    </recommendedName>
    <alternativeName>
        <fullName evidence="1">16S rRNA (adenine(1518)-N(6)/adenine(1519)-N(6))-dimethyltransferase</fullName>
    </alternativeName>
    <alternativeName>
        <fullName evidence="1">16S rRNA dimethyladenosine transferase</fullName>
    </alternativeName>
    <alternativeName>
        <fullName evidence="1">16S rRNA dimethylase</fullName>
    </alternativeName>
    <alternativeName>
        <fullName evidence="1">S-adenosylmethionine-6-N', N'-adenosyl(rRNA) dimethyltransferase</fullName>
    </alternativeName>
</protein>
<accession>Q5GSM9</accession>
<dbReference type="EC" id="2.1.1.182" evidence="1"/>
<dbReference type="EMBL" id="AE017321">
    <property type="protein sequence ID" value="AAW70995.1"/>
    <property type="molecule type" value="Genomic_DNA"/>
</dbReference>
<dbReference type="RefSeq" id="WP_011256605.1">
    <property type="nucleotide sequence ID" value="NC_006833.1"/>
</dbReference>
<dbReference type="SMR" id="Q5GSM9"/>
<dbReference type="STRING" id="292805.Wbm0407"/>
<dbReference type="KEGG" id="wbm:Wbm0407"/>
<dbReference type="eggNOG" id="COG0030">
    <property type="taxonomic scope" value="Bacteria"/>
</dbReference>
<dbReference type="HOGENOM" id="CLU_041220_0_1_5"/>
<dbReference type="Proteomes" id="UP000000534">
    <property type="component" value="Chromosome"/>
</dbReference>
<dbReference type="GO" id="GO:0005737">
    <property type="term" value="C:cytoplasm"/>
    <property type="evidence" value="ECO:0007669"/>
    <property type="project" value="UniProtKB-SubCell"/>
</dbReference>
<dbReference type="GO" id="GO:0052908">
    <property type="term" value="F:16S rRNA (adenine(1518)-N(6)/adenine(1519)-N(6))-dimethyltransferase activity"/>
    <property type="evidence" value="ECO:0007669"/>
    <property type="project" value="UniProtKB-EC"/>
</dbReference>
<dbReference type="GO" id="GO:0003723">
    <property type="term" value="F:RNA binding"/>
    <property type="evidence" value="ECO:0007669"/>
    <property type="project" value="UniProtKB-KW"/>
</dbReference>
<dbReference type="CDD" id="cd02440">
    <property type="entry name" value="AdoMet_MTases"/>
    <property type="match status" value="1"/>
</dbReference>
<dbReference type="FunFam" id="1.10.8.100:FF:000001">
    <property type="entry name" value="Ribosomal RNA small subunit methyltransferase A"/>
    <property type="match status" value="1"/>
</dbReference>
<dbReference type="Gene3D" id="1.10.8.100">
    <property type="entry name" value="Ribosomal RNA adenine dimethylase-like, domain 2"/>
    <property type="match status" value="1"/>
</dbReference>
<dbReference type="Gene3D" id="3.40.50.150">
    <property type="entry name" value="Vaccinia Virus protein VP39"/>
    <property type="match status" value="1"/>
</dbReference>
<dbReference type="HAMAP" id="MF_00607">
    <property type="entry name" value="16SrRNA_methyltr_A"/>
    <property type="match status" value="1"/>
</dbReference>
<dbReference type="InterPro" id="IPR001737">
    <property type="entry name" value="KsgA/Erm"/>
</dbReference>
<dbReference type="InterPro" id="IPR023165">
    <property type="entry name" value="rRNA_Ade_diMease-like_C"/>
</dbReference>
<dbReference type="InterPro" id="IPR020596">
    <property type="entry name" value="rRNA_Ade_Mease_Trfase_CS"/>
</dbReference>
<dbReference type="InterPro" id="IPR020598">
    <property type="entry name" value="rRNA_Ade_methylase_Trfase_N"/>
</dbReference>
<dbReference type="InterPro" id="IPR011530">
    <property type="entry name" value="rRNA_adenine_dimethylase"/>
</dbReference>
<dbReference type="InterPro" id="IPR029063">
    <property type="entry name" value="SAM-dependent_MTases_sf"/>
</dbReference>
<dbReference type="NCBIfam" id="TIGR00755">
    <property type="entry name" value="ksgA"/>
    <property type="match status" value="1"/>
</dbReference>
<dbReference type="PANTHER" id="PTHR11727">
    <property type="entry name" value="DIMETHYLADENOSINE TRANSFERASE"/>
    <property type="match status" value="1"/>
</dbReference>
<dbReference type="PANTHER" id="PTHR11727:SF7">
    <property type="entry name" value="DIMETHYLADENOSINE TRANSFERASE-RELATED"/>
    <property type="match status" value="1"/>
</dbReference>
<dbReference type="Pfam" id="PF00398">
    <property type="entry name" value="RrnaAD"/>
    <property type="match status" value="1"/>
</dbReference>
<dbReference type="SMART" id="SM00650">
    <property type="entry name" value="rADc"/>
    <property type="match status" value="1"/>
</dbReference>
<dbReference type="SUPFAM" id="SSF53335">
    <property type="entry name" value="S-adenosyl-L-methionine-dependent methyltransferases"/>
    <property type="match status" value="1"/>
</dbReference>
<dbReference type="PROSITE" id="PS01131">
    <property type="entry name" value="RRNA_A_DIMETH"/>
    <property type="match status" value="1"/>
</dbReference>
<dbReference type="PROSITE" id="PS51689">
    <property type="entry name" value="SAM_RNA_A_N6_MT"/>
    <property type="match status" value="1"/>
</dbReference>
<name>RSMA_WOLTR</name>
<proteinExistence type="inferred from homology"/>
<organism>
    <name type="scientific">Wolbachia sp. subsp. Brugia malayi (strain TRS)</name>
    <dbReference type="NCBI Taxonomy" id="292805"/>
    <lineage>
        <taxon>Bacteria</taxon>
        <taxon>Pseudomonadati</taxon>
        <taxon>Pseudomonadota</taxon>
        <taxon>Alphaproteobacteria</taxon>
        <taxon>Rickettsiales</taxon>
        <taxon>Anaplasmataceae</taxon>
        <taxon>Wolbachieae</taxon>
        <taxon>Wolbachia</taxon>
    </lineage>
</organism>
<comment type="function">
    <text evidence="1">Specifically dimethylates two adjacent adenosines (A1518 and A1519) in the loop of a conserved hairpin near the 3'-end of 16S rRNA in the 30S particle. May play a critical role in biogenesis of 30S subunits.</text>
</comment>
<comment type="catalytic activity">
    <reaction evidence="1">
        <text>adenosine(1518)/adenosine(1519) in 16S rRNA + 4 S-adenosyl-L-methionine = N(6)-dimethyladenosine(1518)/N(6)-dimethyladenosine(1519) in 16S rRNA + 4 S-adenosyl-L-homocysteine + 4 H(+)</text>
        <dbReference type="Rhea" id="RHEA:19609"/>
        <dbReference type="Rhea" id="RHEA-COMP:10232"/>
        <dbReference type="Rhea" id="RHEA-COMP:10233"/>
        <dbReference type="ChEBI" id="CHEBI:15378"/>
        <dbReference type="ChEBI" id="CHEBI:57856"/>
        <dbReference type="ChEBI" id="CHEBI:59789"/>
        <dbReference type="ChEBI" id="CHEBI:74411"/>
        <dbReference type="ChEBI" id="CHEBI:74493"/>
        <dbReference type="EC" id="2.1.1.182"/>
    </reaction>
</comment>
<comment type="subcellular location">
    <subcellularLocation>
        <location evidence="1">Cytoplasm</location>
    </subcellularLocation>
</comment>
<comment type="similarity">
    <text evidence="1">Belongs to the class I-like SAM-binding methyltransferase superfamily. rRNA adenine N(6)-methyltransferase family. RsmA subfamily.</text>
</comment>
<reference key="1">
    <citation type="journal article" date="2005" name="PLoS Biol.">
        <title>The Wolbachia genome of Brugia malayi: endosymbiont evolution within a human pathogenic nematode.</title>
        <authorList>
            <person name="Foster J."/>
            <person name="Ganatra M."/>
            <person name="Kamal I."/>
            <person name="Ware J."/>
            <person name="Makarova K."/>
            <person name="Ivanova N."/>
            <person name="Bhattacharyya A."/>
            <person name="Kapatral V."/>
            <person name="Kumar S."/>
            <person name="Posfai J."/>
            <person name="Vincze T."/>
            <person name="Ingram J."/>
            <person name="Moran L."/>
            <person name="Lapidus A."/>
            <person name="Omelchenko M."/>
            <person name="Kyrpides N."/>
            <person name="Ghedin E."/>
            <person name="Wang S."/>
            <person name="Goltsman E."/>
            <person name="Joukov V."/>
            <person name="Ostrovskaya O."/>
            <person name="Tsukerman K."/>
            <person name="Mazur M."/>
            <person name="Comb D."/>
            <person name="Koonin E."/>
            <person name="Slatko B."/>
        </authorList>
    </citation>
    <scope>NUCLEOTIDE SEQUENCE [LARGE SCALE GENOMIC DNA]</scope>
    <source>
        <strain>TRS</strain>
    </source>
</reference>
<sequence>MKKFLLKPKKSLGQNFILSSEITKRIVVLAGNLEDFNVIEIGPGYGALTKEILAHNPKSLLAIEKDSNLVKCHDQLLNEHQGKFRIVEADALYVVEEELIERPVKVIANLPYNISLALFLKWLNKIKLFTTFTLMFQKEVADRIIARPNSKDYGSLSVLSQLLCDIRREFDIEPKEFFPRPKVYSSVITVKPLPTQRFAVNLEALTKLTRAVFAQRRKMLRNSLQNVTNRTETALENAKLSGNERPKNLTVEQFCLLANNM</sequence>
<feature type="chain" id="PRO_0000257372" description="Ribosomal RNA small subunit methyltransferase A">
    <location>
        <begin position="1"/>
        <end position="261"/>
    </location>
</feature>
<feature type="binding site" evidence="1">
    <location>
        <position position="15"/>
    </location>
    <ligand>
        <name>S-adenosyl-L-methionine</name>
        <dbReference type="ChEBI" id="CHEBI:59789"/>
    </ligand>
</feature>
<feature type="binding site" evidence="1">
    <location>
        <position position="17"/>
    </location>
    <ligand>
        <name>S-adenosyl-L-methionine</name>
        <dbReference type="ChEBI" id="CHEBI:59789"/>
    </ligand>
</feature>
<feature type="binding site" evidence="1">
    <location>
        <position position="42"/>
    </location>
    <ligand>
        <name>S-adenosyl-L-methionine</name>
        <dbReference type="ChEBI" id="CHEBI:59789"/>
    </ligand>
</feature>
<feature type="binding site" evidence="1">
    <location>
        <position position="64"/>
    </location>
    <ligand>
        <name>S-adenosyl-L-methionine</name>
        <dbReference type="ChEBI" id="CHEBI:59789"/>
    </ligand>
</feature>
<feature type="binding site" evidence="1">
    <location>
        <position position="90"/>
    </location>
    <ligand>
        <name>S-adenosyl-L-methionine</name>
        <dbReference type="ChEBI" id="CHEBI:59789"/>
    </ligand>
</feature>
<feature type="binding site" evidence="1">
    <location>
        <position position="109"/>
    </location>
    <ligand>
        <name>S-adenosyl-L-methionine</name>
        <dbReference type="ChEBI" id="CHEBI:59789"/>
    </ligand>
</feature>
<keyword id="KW-0963">Cytoplasm</keyword>
<keyword id="KW-0489">Methyltransferase</keyword>
<keyword id="KW-1185">Reference proteome</keyword>
<keyword id="KW-0694">RNA-binding</keyword>
<keyword id="KW-0698">rRNA processing</keyword>
<keyword id="KW-0949">S-adenosyl-L-methionine</keyword>
<keyword id="KW-0808">Transferase</keyword>
<evidence type="ECO:0000255" key="1">
    <source>
        <dbReference type="HAMAP-Rule" id="MF_00607"/>
    </source>
</evidence>